<accession>Q7U344</accession>
<keyword id="KW-0963">Cytoplasm</keyword>
<keyword id="KW-0342">GTP-binding</keyword>
<keyword id="KW-0378">Hydrolase</keyword>
<keyword id="KW-0460">Magnesium</keyword>
<keyword id="KW-0479">Metal-binding</keyword>
<keyword id="KW-0547">Nucleotide-binding</keyword>
<keyword id="KW-0630">Potassium</keyword>
<keyword id="KW-1185">Reference proteome</keyword>
<keyword id="KW-0819">tRNA processing</keyword>
<organism>
    <name type="scientific">Haemophilus ducreyi (strain 35000HP / ATCC 700724)</name>
    <dbReference type="NCBI Taxonomy" id="233412"/>
    <lineage>
        <taxon>Bacteria</taxon>
        <taxon>Pseudomonadati</taxon>
        <taxon>Pseudomonadota</taxon>
        <taxon>Gammaproteobacteria</taxon>
        <taxon>Pasteurellales</taxon>
        <taxon>Pasteurellaceae</taxon>
        <taxon>Haemophilus</taxon>
    </lineage>
</organism>
<name>MNME_HAEDU</name>
<reference key="1">
    <citation type="submission" date="2003-06" db="EMBL/GenBank/DDBJ databases">
        <title>The complete genome sequence of Haemophilus ducreyi.</title>
        <authorList>
            <person name="Munson R.S. Jr."/>
            <person name="Ray W.C."/>
            <person name="Mahairas G."/>
            <person name="Sabo P."/>
            <person name="Mungur R."/>
            <person name="Johnson L."/>
            <person name="Nguyen D."/>
            <person name="Wang J."/>
            <person name="Forst C."/>
            <person name="Hood L."/>
        </authorList>
    </citation>
    <scope>NUCLEOTIDE SEQUENCE [LARGE SCALE GENOMIC DNA]</scope>
    <source>
        <strain>35000HP / ATCC 700724</strain>
    </source>
</reference>
<feature type="chain" id="PRO_0000188880" description="tRNA modification GTPase MnmE">
    <location>
        <begin position="1"/>
        <end position="452"/>
    </location>
</feature>
<feature type="domain" description="TrmE-type G">
    <location>
        <begin position="214"/>
        <end position="375"/>
    </location>
</feature>
<feature type="binding site" evidence="1">
    <location>
        <position position="21"/>
    </location>
    <ligand>
        <name>(6S)-5-formyl-5,6,7,8-tetrahydrofolate</name>
        <dbReference type="ChEBI" id="CHEBI:57457"/>
    </ligand>
</feature>
<feature type="binding site" evidence="1">
    <location>
        <position position="78"/>
    </location>
    <ligand>
        <name>(6S)-5-formyl-5,6,7,8-tetrahydrofolate</name>
        <dbReference type="ChEBI" id="CHEBI:57457"/>
    </ligand>
</feature>
<feature type="binding site" evidence="1">
    <location>
        <position position="118"/>
    </location>
    <ligand>
        <name>(6S)-5-formyl-5,6,7,8-tetrahydrofolate</name>
        <dbReference type="ChEBI" id="CHEBI:57457"/>
    </ligand>
</feature>
<feature type="binding site" evidence="1">
    <location>
        <begin position="224"/>
        <end position="229"/>
    </location>
    <ligand>
        <name>GTP</name>
        <dbReference type="ChEBI" id="CHEBI:37565"/>
    </ligand>
</feature>
<feature type="binding site" evidence="1">
    <location>
        <position position="224"/>
    </location>
    <ligand>
        <name>K(+)</name>
        <dbReference type="ChEBI" id="CHEBI:29103"/>
    </ligand>
</feature>
<feature type="binding site" evidence="1">
    <location>
        <position position="228"/>
    </location>
    <ligand>
        <name>Mg(2+)</name>
        <dbReference type="ChEBI" id="CHEBI:18420"/>
    </ligand>
</feature>
<feature type="binding site" evidence="1">
    <location>
        <begin position="243"/>
        <end position="249"/>
    </location>
    <ligand>
        <name>GTP</name>
        <dbReference type="ChEBI" id="CHEBI:37565"/>
    </ligand>
</feature>
<feature type="binding site" evidence="1">
    <location>
        <position position="243"/>
    </location>
    <ligand>
        <name>K(+)</name>
        <dbReference type="ChEBI" id="CHEBI:29103"/>
    </ligand>
</feature>
<feature type="binding site" evidence="1">
    <location>
        <position position="245"/>
    </location>
    <ligand>
        <name>K(+)</name>
        <dbReference type="ChEBI" id="CHEBI:29103"/>
    </ligand>
</feature>
<feature type="binding site" evidence="1">
    <location>
        <position position="248"/>
    </location>
    <ligand>
        <name>K(+)</name>
        <dbReference type="ChEBI" id="CHEBI:29103"/>
    </ligand>
</feature>
<feature type="binding site" evidence="1">
    <location>
        <position position="249"/>
    </location>
    <ligand>
        <name>Mg(2+)</name>
        <dbReference type="ChEBI" id="CHEBI:18420"/>
    </ligand>
</feature>
<feature type="binding site" evidence="1">
    <location>
        <begin position="268"/>
        <end position="271"/>
    </location>
    <ligand>
        <name>GTP</name>
        <dbReference type="ChEBI" id="CHEBI:37565"/>
    </ligand>
</feature>
<feature type="binding site" evidence="1">
    <location>
        <position position="452"/>
    </location>
    <ligand>
        <name>(6S)-5-formyl-5,6,7,8-tetrahydrofolate</name>
        <dbReference type="ChEBI" id="CHEBI:57457"/>
    </ligand>
</feature>
<gene>
    <name evidence="1" type="primary">mnmE</name>
    <name evidence="1" type="synonym">trmE</name>
    <name type="ordered locus">HD_0039</name>
</gene>
<dbReference type="EC" id="3.6.-.-" evidence="1"/>
<dbReference type="EMBL" id="AE017143">
    <property type="protein sequence ID" value="AAP95054.1"/>
    <property type="molecule type" value="Genomic_DNA"/>
</dbReference>
<dbReference type="RefSeq" id="WP_010944108.1">
    <property type="nucleotide sequence ID" value="NC_002940.2"/>
</dbReference>
<dbReference type="SMR" id="Q7U344"/>
<dbReference type="STRING" id="233412.HD_0039"/>
<dbReference type="KEGG" id="hdu:HD_0039"/>
<dbReference type="eggNOG" id="COG0486">
    <property type="taxonomic scope" value="Bacteria"/>
</dbReference>
<dbReference type="HOGENOM" id="CLU_019624_4_1_6"/>
<dbReference type="OrthoDB" id="9805918at2"/>
<dbReference type="Proteomes" id="UP000001022">
    <property type="component" value="Chromosome"/>
</dbReference>
<dbReference type="GO" id="GO:0005829">
    <property type="term" value="C:cytosol"/>
    <property type="evidence" value="ECO:0007669"/>
    <property type="project" value="TreeGrafter"/>
</dbReference>
<dbReference type="GO" id="GO:0005525">
    <property type="term" value="F:GTP binding"/>
    <property type="evidence" value="ECO:0007669"/>
    <property type="project" value="UniProtKB-UniRule"/>
</dbReference>
<dbReference type="GO" id="GO:0003924">
    <property type="term" value="F:GTPase activity"/>
    <property type="evidence" value="ECO:0007669"/>
    <property type="project" value="UniProtKB-UniRule"/>
</dbReference>
<dbReference type="GO" id="GO:0046872">
    <property type="term" value="F:metal ion binding"/>
    <property type="evidence" value="ECO:0007669"/>
    <property type="project" value="UniProtKB-KW"/>
</dbReference>
<dbReference type="GO" id="GO:0030488">
    <property type="term" value="P:tRNA methylation"/>
    <property type="evidence" value="ECO:0007669"/>
    <property type="project" value="TreeGrafter"/>
</dbReference>
<dbReference type="GO" id="GO:0002098">
    <property type="term" value="P:tRNA wobble uridine modification"/>
    <property type="evidence" value="ECO:0007669"/>
    <property type="project" value="TreeGrafter"/>
</dbReference>
<dbReference type="CDD" id="cd04164">
    <property type="entry name" value="trmE"/>
    <property type="match status" value="1"/>
</dbReference>
<dbReference type="CDD" id="cd14858">
    <property type="entry name" value="TrmE_N"/>
    <property type="match status" value="1"/>
</dbReference>
<dbReference type="FunFam" id="3.30.1360.120:FF:000001">
    <property type="entry name" value="tRNA modification GTPase MnmE"/>
    <property type="match status" value="1"/>
</dbReference>
<dbReference type="FunFam" id="3.40.50.300:FF:000249">
    <property type="entry name" value="tRNA modification GTPase MnmE"/>
    <property type="match status" value="1"/>
</dbReference>
<dbReference type="Gene3D" id="3.40.50.300">
    <property type="entry name" value="P-loop containing nucleotide triphosphate hydrolases"/>
    <property type="match status" value="1"/>
</dbReference>
<dbReference type="Gene3D" id="3.30.1360.120">
    <property type="entry name" value="Probable tRNA modification gtpase trme, domain 1"/>
    <property type="match status" value="1"/>
</dbReference>
<dbReference type="Gene3D" id="1.20.120.430">
    <property type="entry name" value="tRNA modification GTPase MnmE domain 2"/>
    <property type="match status" value="1"/>
</dbReference>
<dbReference type="HAMAP" id="MF_00379">
    <property type="entry name" value="GTPase_MnmE"/>
    <property type="match status" value="1"/>
</dbReference>
<dbReference type="InterPro" id="IPR031168">
    <property type="entry name" value="G_TrmE"/>
</dbReference>
<dbReference type="InterPro" id="IPR006073">
    <property type="entry name" value="GTP-bd"/>
</dbReference>
<dbReference type="InterPro" id="IPR018948">
    <property type="entry name" value="GTP-bd_TrmE_N"/>
</dbReference>
<dbReference type="InterPro" id="IPR004520">
    <property type="entry name" value="GTPase_MnmE"/>
</dbReference>
<dbReference type="InterPro" id="IPR027368">
    <property type="entry name" value="MnmE_dom2"/>
</dbReference>
<dbReference type="InterPro" id="IPR025867">
    <property type="entry name" value="MnmE_helical"/>
</dbReference>
<dbReference type="InterPro" id="IPR027417">
    <property type="entry name" value="P-loop_NTPase"/>
</dbReference>
<dbReference type="InterPro" id="IPR005225">
    <property type="entry name" value="Small_GTP-bd"/>
</dbReference>
<dbReference type="InterPro" id="IPR027266">
    <property type="entry name" value="TrmE/GcvT_dom1"/>
</dbReference>
<dbReference type="NCBIfam" id="TIGR00450">
    <property type="entry name" value="mnmE_trmE_thdF"/>
    <property type="match status" value="1"/>
</dbReference>
<dbReference type="NCBIfam" id="NF003661">
    <property type="entry name" value="PRK05291.1-3"/>
    <property type="match status" value="1"/>
</dbReference>
<dbReference type="NCBIfam" id="TIGR00231">
    <property type="entry name" value="small_GTP"/>
    <property type="match status" value="1"/>
</dbReference>
<dbReference type="PANTHER" id="PTHR42714">
    <property type="entry name" value="TRNA MODIFICATION GTPASE GTPBP3"/>
    <property type="match status" value="1"/>
</dbReference>
<dbReference type="PANTHER" id="PTHR42714:SF2">
    <property type="entry name" value="TRNA MODIFICATION GTPASE GTPBP3, MITOCHONDRIAL"/>
    <property type="match status" value="1"/>
</dbReference>
<dbReference type="Pfam" id="PF01926">
    <property type="entry name" value="MMR_HSR1"/>
    <property type="match status" value="1"/>
</dbReference>
<dbReference type="Pfam" id="PF12631">
    <property type="entry name" value="MnmE_helical"/>
    <property type="match status" value="1"/>
</dbReference>
<dbReference type="Pfam" id="PF10396">
    <property type="entry name" value="TrmE_N"/>
    <property type="match status" value="1"/>
</dbReference>
<dbReference type="SUPFAM" id="SSF52540">
    <property type="entry name" value="P-loop containing nucleoside triphosphate hydrolases"/>
    <property type="match status" value="1"/>
</dbReference>
<dbReference type="SUPFAM" id="SSF116878">
    <property type="entry name" value="TrmE connector domain"/>
    <property type="match status" value="1"/>
</dbReference>
<dbReference type="PROSITE" id="PS51709">
    <property type="entry name" value="G_TRME"/>
    <property type="match status" value="1"/>
</dbReference>
<proteinExistence type="inferred from homology"/>
<comment type="function">
    <text evidence="1">Exhibits a very high intrinsic GTPase hydrolysis rate. Involved in the addition of a carboxymethylaminomethyl (cmnm) group at the wobble position (U34) of certain tRNAs, forming tRNA-cmnm(5)s(2)U34.</text>
</comment>
<comment type="cofactor">
    <cofactor evidence="1">
        <name>K(+)</name>
        <dbReference type="ChEBI" id="CHEBI:29103"/>
    </cofactor>
    <text evidence="1">Binds 1 potassium ion per subunit.</text>
</comment>
<comment type="subunit">
    <text evidence="1">Homodimer. Heterotetramer of two MnmE and two MnmG subunits.</text>
</comment>
<comment type="subcellular location">
    <subcellularLocation>
        <location evidence="1">Cytoplasm</location>
    </subcellularLocation>
</comment>
<comment type="similarity">
    <text evidence="1">Belongs to the TRAFAC class TrmE-Era-EngA-EngB-Septin-like GTPase superfamily. TrmE GTPase family.</text>
</comment>
<sequence length="452" mass="49476">MKETIVAQATPIGRGGVGILRVSGPLAQQVAQEILGKTLTPRLAHYLPFKDNDGEILDQGIALFFKAPNSFTGEDVLELQGHGGQVILDLLLKRILTINGIRIARTGEFSEQAFLNDKLDLAQAEAIADLIDATSEQAARSALKSLQGEFSNKINQLVDQVIYLRTYVEAAIDFPDEEIDFLADGKIERHLNDIIHQLAAVRQEAKQGSILREGMKAVIAGRPNAGKSSLLNALAGREAAIVTNIAGTTRDVLHEHIHLDGMPLHIIDTAGLREASDEVEKIGIQRAWNEIVAADHVLLMLDSTEQSAYAFKTEWAEFLAKLPPKMPITIIRNKVDLSGEVEGLTQLDGFTLIRLSAQTKIGVDVLREHLKTSMGYQSSTEGGFLARRRHLQALETAAKHLTQGHIQLTQFFAGELLAEELRLVQNTLSEITGQFTSDDLLGNIFSSFCIGK</sequence>
<protein>
    <recommendedName>
        <fullName evidence="1">tRNA modification GTPase MnmE</fullName>
        <ecNumber evidence="1">3.6.-.-</ecNumber>
    </recommendedName>
</protein>
<evidence type="ECO:0000255" key="1">
    <source>
        <dbReference type="HAMAP-Rule" id="MF_00379"/>
    </source>
</evidence>